<proteinExistence type="evidence at protein level"/>
<dbReference type="EC" id="3.1.1.3" evidence="5 7 8 9 15"/>
<dbReference type="EC" id="3.1.1.4" evidence="5 13"/>
<dbReference type="EMBL" id="AY894804">
    <property type="protein sequence ID" value="AAW81962.1"/>
    <property type="molecule type" value="mRNA"/>
</dbReference>
<dbReference type="EMBL" id="AJ278475">
    <property type="protein sequence ID" value="CAC01131.1"/>
    <property type="status" value="ALT_INIT"/>
    <property type="molecule type" value="mRNA"/>
</dbReference>
<dbReference type="EMBL" id="AJ278476">
    <property type="protein sequence ID" value="CAC01132.1"/>
    <property type="status" value="ALT_INIT"/>
    <property type="molecule type" value="mRNA"/>
</dbReference>
<dbReference type="EMBL" id="AY203925">
    <property type="protein sequence ID" value="AAP34448.1"/>
    <property type="status" value="ALT_FRAME"/>
    <property type="molecule type" value="mRNA"/>
</dbReference>
<dbReference type="EMBL" id="AP006621">
    <property type="status" value="NOT_ANNOTATED_CDS"/>
    <property type="molecule type" value="Genomic_DNA"/>
</dbReference>
<dbReference type="EMBL" id="BC011958">
    <property type="protein sequence ID" value="AAH11958.1"/>
    <property type="molecule type" value="mRNA"/>
</dbReference>
<dbReference type="EMBL" id="BC017280">
    <property type="protein sequence ID" value="AAH17280.1"/>
    <property type="molecule type" value="mRNA"/>
</dbReference>
<dbReference type="EMBL" id="AF055000">
    <property type="protein sequence ID" value="AAC09354.1"/>
    <property type="molecule type" value="mRNA"/>
</dbReference>
<dbReference type="CCDS" id="CCDS7718.1">
    <molecule id="Q96AD5-1"/>
</dbReference>
<dbReference type="RefSeq" id="NP_065109.1">
    <molecule id="Q96AD5-1"/>
    <property type="nucleotide sequence ID" value="NM_020376.4"/>
</dbReference>
<dbReference type="RefSeq" id="XP_016873517.1">
    <property type="nucleotide sequence ID" value="XM_017018028.1"/>
</dbReference>
<dbReference type="SMR" id="Q96AD5"/>
<dbReference type="BioGRID" id="121370">
    <property type="interactions" value="54"/>
</dbReference>
<dbReference type="FunCoup" id="Q96AD5">
    <property type="interactions" value="632"/>
</dbReference>
<dbReference type="IntAct" id="Q96AD5">
    <property type="interactions" value="27"/>
</dbReference>
<dbReference type="MINT" id="Q96AD5"/>
<dbReference type="STRING" id="9606.ENSP00000337701"/>
<dbReference type="BindingDB" id="Q96AD5"/>
<dbReference type="ChEMBL" id="CHEMBL3822353"/>
<dbReference type="GuidetoPHARMACOLOGY" id="3253"/>
<dbReference type="SwissLipids" id="SLP:000000311"/>
<dbReference type="GlyCosmos" id="Q96AD5">
    <property type="glycosylation" value="2 sites, 1 glycan"/>
</dbReference>
<dbReference type="GlyGen" id="Q96AD5">
    <property type="glycosylation" value="4 sites, 1 N-linked glycan (2 sites), 1 O-linked glycan (1 site)"/>
</dbReference>
<dbReference type="iPTMnet" id="Q96AD5"/>
<dbReference type="PhosphoSitePlus" id="Q96AD5"/>
<dbReference type="SwissPalm" id="Q96AD5"/>
<dbReference type="BioMuta" id="PNPLA2"/>
<dbReference type="DMDM" id="74731110"/>
<dbReference type="jPOST" id="Q96AD5"/>
<dbReference type="MassIVE" id="Q96AD5"/>
<dbReference type="PaxDb" id="9606-ENSP00000337701"/>
<dbReference type="PeptideAtlas" id="Q96AD5"/>
<dbReference type="ProteomicsDB" id="75955">
    <molecule id="Q96AD5-1"/>
</dbReference>
<dbReference type="ProteomicsDB" id="75956">
    <molecule id="Q96AD5-2"/>
</dbReference>
<dbReference type="Pumba" id="Q96AD5"/>
<dbReference type="Antibodypedia" id="22689">
    <property type="antibodies" value="529 antibodies from 38 providers"/>
</dbReference>
<dbReference type="DNASU" id="57104"/>
<dbReference type="Ensembl" id="ENST00000336615.9">
    <molecule id="Q96AD5-1"/>
    <property type="protein sequence ID" value="ENSP00000337701.4"/>
    <property type="gene ID" value="ENSG00000177666.17"/>
</dbReference>
<dbReference type="GeneID" id="57104"/>
<dbReference type="KEGG" id="hsa:57104"/>
<dbReference type="MANE-Select" id="ENST00000336615.9">
    <property type="protein sequence ID" value="ENSP00000337701.4"/>
    <property type="RefSeq nucleotide sequence ID" value="NM_020376.4"/>
    <property type="RefSeq protein sequence ID" value="NP_065109.1"/>
</dbReference>
<dbReference type="UCSC" id="uc001lrt.4">
    <molecule id="Q96AD5-1"/>
    <property type="organism name" value="human"/>
</dbReference>
<dbReference type="AGR" id="HGNC:30802"/>
<dbReference type="CTD" id="57104"/>
<dbReference type="DisGeNET" id="57104"/>
<dbReference type="GeneCards" id="PNPLA2"/>
<dbReference type="HGNC" id="HGNC:30802">
    <property type="gene designation" value="PNPLA2"/>
</dbReference>
<dbReference type="HPA" id="ENSG00000177666">
    <property type="expression patterns" value="Tissue enhanced (adipose tissue, breast)"/>
</dbReference>
<dbReference type="MalaCards" id="PNPLA2"/>
<dbReference type="MIM" id="609059">
    <property type="type" value="gene"/>
</dbReference>
<dbReference type="MIM" id="610717">
    <property type="type" value="phenotype"/>
</dbReference>
<dbReference type="neXtProt" id="NX_Q96AD5"/>
<dbReference type="OpenTargets" id="ENSG00000177666"/>
<dbReference type="Orphanet" id="98908">
    <property type="disease" value="Neutral lipid storage disease with myopathy"/>
</dbReference>
<dbReference type="Orphanet" id="565612">
    <property type="disease" value="Primary triglyceride deposit cardiomyovasculopathy"/>
</dbReference>
<dbReference type="PharmGKB" id="PA134903083"/>
<dbReference type="VEuPathDB" id="HostDB:ENSG00000177666"/>
<dbReference type="eggNOG" id="KOG3773">
    <property type="taxonomic scope" value="Eukaryota"/>
</dbReference>
<dbReference type="GeneTree" id="ENSGT00940000160155"/>
<dbReference type="HOGENOM" id="CLU_018371_0_1_1"/>
<dbReference type="InParanoid" id="Q96AD5"/>
<dbReference type="OMA" id="FPREATW"/>
<dbReference type="OrthoDB" id="197155at2759"/>
<dbReference type="PAN-GO" id="Q96AD5">
    <property type="GO annotations" value="6 GO annotations based on evolutionary models"/>
</dbReference>
<dbReference type="PhylomeDB" id="Q96AD5"/>
<dbReference type="TreeFam" id="TF314272"/>
<dbReference type="PathwayCommons" id="Q96AD5"/>
<dbReference type="Reactome" id="R-HSA-1482883">
    <property type="pathway name" value="Acyl chain remodeling of DAG and TAG"/>
</dbReference>
<dbReference type="Reactome" id="R-HSA-381426">
    <property type="pathway name" value="Regulation of Insulin-like Growth Factor (IGF) transport and uptake by Insulin-like Growth Factor Binding Proteins (IGFBPs)"/>
</dbReference>
<dbReference type="Reactome" id="R-HSA-8957275">
    <property type="pathway name" value="Post-translational protein phosphorylation"/>
</dbReference>
<dbReference type="Reactome" id="R-HSA-9841922">
    <property type="pathway name" value="MLL4 and MLL3 complexes regulate expression of PPARG target genes in adipogenesis and hepatic steatosis"/>
</dbReference>
<dbReference type="SignaLink" id="Q96AD5"/>
<dbReference type="UniPathway" id="UPA00256"/>
<dbReference type="BioGRID-ORCS" id="57104">
    <property type="hits" value="12 hits in 1157 CRISPR screens"/>
</dbReference>
<dbReference type="ChiTaRS" id="PNPLA2">
    <property type="organism name" value="human"/>
</dbReference>
<dbReference type="GeneWiki" id="PNPLA2"/>
<dbReference type="GenomeRNAi" id="57104"/>
<dbReference type="Pharos" id="Q96AD5">
    <property type="development level" value="Tchem"/>
</dbReference>
<dbReference type="PRO" id="PR:Q96AD5"/>
<dbReference type="Proteomes" id="UP000005640">
    <property type="component" value="Chromosome 11"/>
</dbReference>
<dbReference type="RNAct" id="Q96AD5">
    <property type="molecule type" value="protein"/>
</dbReference>
<dbReference type="Bgee" id="ENSG00000177666">
    <property type="expression patterns" value="Expressed in omental fat pad and 187 other cell types or tissues"/>
</dbReference>
<dbReference type="GO" id="GO:0005737">
    <property type="term" value="C:cytoplasm"/>
    <property type="evidence" value="ECO:0000250"/>
    <property type="project" value="UniProtKB"/>
</dbReference>
<dbReference type="GO" id="GO:0005829">
    <property type="term" value="C:cytosol"/>
    <property type="evidence" value="ECO:0007669"/>
    <property type="project" value="Ensembl"/>
</dbReference>
<dbReference type="GO" id="GO:0005788">
    <property type="term" value="C:endoplasmic reticulum lumen"/>
    <property type="evidence" value="ECO:0000304"/>
    <property type="project" value="Reactome"/>
</dbReference>
<dbReference type="GO" id="GO:0005789">
    <property type="term" value="C:endoplasmic reticulum membrane"/>
    <property type="evidence" value="ECO:0000304"/>
    <property type="project" value="Reactome"/>
</dbReference>
<dbReference type="GO" id="GO:0005811">
    <property type="term" value="C:lipid droplet"/>
    <property type="evidence" value="ECO:0000314"/>
    <property type="project" value="HPA"/>
</dbReference>
<dbReference type="GO" id="GO:0016020">
    <property type="term" value="C:membrane"/>
    <property type="evidence" value="ECO:0000318"/>
    <property type="project" value="GO_Central"/>
</dbReference>
<dbReference type="GO" id="GO:0005654">
    <property type="term" value="C:nucleoplasm"/>
    <property type="evidence" value="ECO:0000314"/>
    <property type="project" value="HPA"/>
</dbReference>
<dbReference type="GO" id="GO:0005886">
    <property type="term" value="C:plasma membrane"/>
    <property type="evidence" value="ECO:0000314"/>
    <property type="project" value="UniProtKB"/>
</dbReference>
<dbReference type="GO" id="GO:0016411">
    <property type="term" value="F:acylglycerol O-acyltransferase activity"/>
    <property type="evidence" value="ECO:0000314"/>
    <property type="project" value="UniProtKB"/>
</dbReference>
<dbReference type="GO" id="GO:0051265">
    <property type="term" value="F:diolein transacylation activity"/>
    <property type="evidence" value="ECO:0000314"/>
    <property type="project" value="UniProtKB"/>
</dbReference>
<dbReference type="GO" id="GO:0004465">
    <property type="term" value="F:lipoprotein lipase activity"/>
    <property type="evidence" value="ECO:0000304"/>
    <property type="project" value="Reactome"/>
</dbReference>
<dbReference type="GO" id="GO:0051264">
    <property type="term" value="F:mono-olein transacylation activity"/>
    <property type="evidence" value="ECO:0000314"/>
    <property type="project" value="UniProtKB"/>
</dbReference>
<dbReference type="GO" id="GO:0004623">
    <property type="term" value="F:phospholipase A2 activity"/>
    <property type="evidence" value="ECO:0000314"/>
    <property type="project" value="UniProtKB"/>
</dbReference>
<dbReference type="GO" id="GO:0050253">
    <property type="term" value="F:retinyl-palmitate esterase activity"/>
    <property type="evidence" value="ECO:0000269"/>
    <property type="project" value="UniProtKB"/>
</dbReference>
<dbReference type="GO" id="GO:0004806">
    <property type="term" value="F:triacylglycerol lipase activity"/>
    <property type="evidence" value="ECO:0000314"/>
    <property type="project" value="UniProtKB"/>
</dbReference>
<dbReference type="GO" id="GO:0036155">
    <property type="term" value="P:acylglycerol acyl-chain remodeling"/>
    <property type="evidence" value="ECO:0000304"/>
    <property type="project" value="Reactome"/>
</dbReference>
<dbReference type="GO" id="GO:0006651">
    <property type="term" value="P:diacylglycerol biosynthetic process"/>
    <property type="evidence" value="ECO:0000250"/>
    <property type="project" value="UniProtKB"/>
</dbReference>
<dbReference type="GO" id="GO:0035356">
    <property type="term" value="P:intracellular triglyceride homeostasis"/>
    <property type="evidence" value="ECO:0000315"/>
    <property type="project" value="UniProtKB"/>
</dbReference>
<dbReference type="GO" id="GO:1905691">
    <property type="term" value="P:lipid droplet disassembly"/>
    <property type="evidence" value="ECO:0000315"/>
    <property type="project" value="UniProtKB"/>
</dbReference>
<dbReference type="GO" id="GO:0160077">
    <property type="term" value="P:lipid droplet fusion"/>
    <property type="evidence" value="ECO:0000314"/>
    <property type="project" value="UniProtKB"/>
</dbReference>
<dbReference type="GO" id="GO:0055088">
    <property type="term" value="P:lipid homeostasis"/>
    <property type="evidence" value="ECO:0000318"/>
    <property type="project" value="GO_Central"/>
</dbReference>
<dbReference type="GO" id="GO:0019915">
    <property type="term" value="P:lipid storage"/>
    <property type="evidence" value="ECO:0007669"/>
    <property type="project" value="Ensembl"/>
</dbReference>
<dbReference type="GO" id="GO:0010891">
    <property type="term" value="P:negative regulation of triglyceride storage"/>
    <property type="evidence" value="ECO:0000314"/>
    <property type="project" value="UniProtKB"/>
</dbReference>
<dbReference type="GO" id="GO:0007603">
    <property type="term" value="P:phototransduction, visible light"/>
    <property type="evidence" value="ECO:0007669"/>
    <property type="project" value="Ensembl"/>
</dbReference>
<dbReference type="GO" id="GO:0010898">
    <property type="term" value="P:positive regulation of triglyceride catabolic process"/>
    <property type="evidence" value="ECO:0000314"/>
    <property type="project" value="UniProtKB"/>
</dbReference>
<dbReference type="GO" id="GO:0019433">
    <property type="term" value="P:triglyceride catabolic process"/>
    <property type="evidence" value="ECO:0000250"/>
    <property type="project" value="UniProtKB"/>
</dbReference>
<dbReference type="CDD" id="cd07220">
    <property type="entry name" value="Pat_PNPLA2"/>
    <property type="match status" value="1"/>
</dbReference>
<dbReference type="FunFam" id="3.40.1090.10:FF:000021">
    <property type="entry name" value="Patatin-like phospholipase domain containing 2"/>
    <property type="match status" value="1"/>
</dbReference>
<dbReference type="FunFam" id="3.40.1090.10:FF:000003">
    <property type="entry name" value="Patatin-like phospholipase domain-containing protein 2"/>
    <property type="match status" value="1"/>
</dbReference>
<dbReference type="Gene3D" id="3.40.1090.10">
    <property type="entry name" value="Cytosolic phospholipase A2 catalytic domain"/>
    <property type="match status" value="2"/>
</dbReference>
<dbReference type="InterPro" id="IPR016035">
    <property type="entry name" value="Acyl_Trfase/lysoPLipase"/>
</dbReference>
<dbReference type="InterPro" id="IPR033562">
    <property type="entry name" value="PLPL"/>
</dbReference>
<dbReference type="InterPro" id="IPR033903">
    <property type="entry name" value="PNPLA2"/>
</dbReference>
<dbReference type="InterPro" id="IPR002641">
    <property type="entry name" value="PNPLA_dom"/>
</dbReference>
<dbReference type="PANTHER" id="PTHR12406">
    <property type="entry name" value="CALCIUM-INDEPENDENT PHOSPHOLIPASE A2 IPLA2 -RELATED"/>
    <property type="match status" value="1"/>
</dbReference>
<dbReference type="PANTHER" id="PTHR12406:SF29">
    <property type="entry name" value="PATATIN-LIKE PHOSPHOLIPASE DOMAIN-CONTAINING PROTEIN 2"/>
    <property type="match status" value="1"/>
</dbReference>
<dbReference type="Pfam" id="PF01734">
    <property type="entry name" value="Patatin"/>
    <property type="match status" value="1"/>
</dbReference>
<dbReference type="SUPFAM" id="SSF52151">
    <property type="entry name" value="FabD/lysophospholipase-like"/>
    <property type="match status" value="1"/>
</dbReference>
<dbReference type="PROSITE" id="PS51635">
    <property type="entry name" value="PNPLA"/>
    <property type="match status" value="1"/>
</dbReference>
<gene>
    <name evidence="34" type="primary">PNPLA2</name>
    <name evidence="25" type="synonym">ATGL</name>
    <name type="ORF">FP17548</name>
</gene>
<sequence length="504" mass="55316">MFPREKTWNISFAGCGFLGVYYVGVASCLREHAPFLVANATHIYGASAGALTATALVTGVCLGEAGAKFIEVSKEARKRFLGPLHPSFNLVKIIRSFLLKVLPADSHEHASGRLGISLTRVSDGENVIISHFNSKDELIQANVCSGFIPVYCGLIPPSLQGVRYVDGGISDNLPLYELKNTITVSPFSGESDICPQDSSTNIHELRVTNTSIQFNLRNLYRLSKALFPPEPLVLREMCKQGYRDGLRFLQRNGLLNRPNPLLALPPARPHGPEDKDQAVESAQAEDYSQLPGEDHILEHLPARLNEALLEACVEPTDLLTTLSNMLPVRLATAMMVPYTLPLESALSFTIRLLEWLPDVPEDIRWMKEQTGSICQYLVMRAKRKLGRHLPSRLPEQVELRRVQSLPSVPLSCAAYREALPGWMRNNLSLGDALAKWEECQRQLLLGLFCTNVAFPPEALRMRAPADPAPAPADPASPQHQLAGPAPLLSTPAPEARPVIGALGL</sequence>
<organism>
    <name type="scientific">Homo sapiens</name>
    <name type="common">Human</name>
    <dbReference type="NCBI Taxonomy" id="9606"/>
    <lineage>
        <taxon>Eukaryota</taxon>
        <taxon>Metazoa</taxon>
        <taxon>Chordata</taxon>
        <taxon>Craniata</taxon>
        <taxon>Vertebrata</taxon>
        <taxon>Euteleostomi</taxon>
        <taxon>Mammalia</taxon>
        <taxon>Eutheria</taxon>
        <taxon>Euarchontoglires</taxon>
        <taxon>Primates</taxon>
        <taxon>Haplorrhini</taxon>
        <taxon>Catarrhini</taxon>
        <taxon>Hominidae</taxon>
        <taxon>Homo</taxon>
    </lineage>
</organism>
<accession>Q96AD5</accession>
<accession>O60643</accession>
<accession>Q5EFF5</accession>
<accession>Q6XYE5</accession>
<accession>Q96ET6</accession>
<accession>Q9NQ61</accession>
<accession>Q9NQ62</accession>
<name>PLPL2_HUMAN</name>
<evidence type="ECO:0000250" key="1">
    <source>
        <dbReference type="UniProtKB" id="Q8BJ56"/>
    </source>
</evidence>
<evidence type="ECO:0000255" key="2"/>
<evidence type="ECO:0000255" key="3">
    <source>
        <dbReference type="PROSITE-ProRule" id="PRU01161"/>
    </source>
</evidence>
<evidence type="ECO:0000256" key="4">
    <source>
        <dbReference type="SAM" id="MobiDB-lite"/>
    </source>
</evidence>
<evidence type="ECO:0000269" key="5">
    <source>
    </source>
</evidence>
<evidence type="ECO:0000269" key="6">
    <source>
    </source>
</evidence>
<evidence type="ECO:0000269" key="7">
    <source>
    </source>
</evidence>
<evidence type="ECO:0000269" key="8">
    <source>
    </source>
</evidence>
<evidence type="ECO:0000269" key="9">
    <source>
    </source>
</evidence>
<evidence type="ECO:0000269" key="10">
    <source>
    </source>
</evidence>
<evidence type="ECO:0000269" key="11">
    <source>
    </source>
</evidence>
<evidence type="ECO:0000269" key="12">
    <source>
    </source>
</evidence>
<evidence type="ECO:0000269" key="13">
    <source>
    </source>
</evidence>
<evidence type="ECO:0000269" key="14">
    <source>
    </source>
</evidence>
<evidence type="ECO:0000269" key="15">
    <source>
    </source>
</evidence>
<evidence type="ECO:0000269" key="16">
    <source>
    </source>
</evidence>
<evidence type="ECO:0000269" key="17">
    <source>
    </source>
</evidence>
<evidence type="ECO:0000269" key="18">
    <source>
    </source>
</evidence>
<evidence type="ECO:0000269" key="19">
    <source>
    </source>
</evidence>
<evidence type="ECO:0000269" key="20">
    <source>
    </source>
</evidence>
<evidence type="ECO:0000269" key="21">
    <source>
    </source>
</evidence>
<evidence type="ECO:0000269" key="22">
    <source ref="2"/>
</evidence>
<evidence type="ECO:0000303" key="23">
    <source>
    </source>
</evidence>
<evidence type="ECO:0000303" key="24">
    <source>
    </source>
</evidence>
<evidence type="ECO:0000303" key="25">
    <source>
    </source>
</evidence>
<evidence type="ECO:0000303" key="26">
    <source>
    </source>
</evidence>
<evidence type="ECO:0000303" key="27">
    <source>
    </source>
</evidence>
<evidence type="ECO:0000305" key="28"/>
<evidence type="ECO:0000305" key="29">
    <source>
    </source>
</evidence>
<evidence type="ECO:0000305" key="30">
    <source>
    </source>
</evidence>
<evidence type="ECO:0000305" key="31">
    <source>
    </source>
</evidence>
<evidence type="ECO:0000305" key="32">
    <source>
    </source>
</evidence>
<evidence type="ECO:0000305" key="33">
    <source>
    </source>
</evidence>
<evidence type="ECO:0000312" key="34">
    <source>
        <dbReference type="HGNC" id="HGNC:30802"/>
    </source>
</evidence>
<evidence type="ECO:0007744" key="35">
    <source>
    </source>
</evidence>
<evidence type="ECO:0007744" key="36">
    <source>
    </source>
</evidence>
<evidence type="ECO:0007744" key="37">
    <source>
    </source>
</evidence>
<protein>
    <recommendedName>
        <fullName evidence="28">Patatin-like phospholipase domain-containing protein 2</fullName>
        <ecNumber evidence="5 7 8 9 15">3.1.1.3</ecNumber>
    </recommendedName>
    <alternativeName>
        <fullName evidence="25">Adipose triglyceride lipase</fullName>
    </alternativeName>
    <alternativeName>
        <fullName evidence="23">Calcium-independent phospholipase A2-zeta</fullName>
        <shortName evidence="23">iPLA2-zeta</shortName>
        <ecNumber evidence="5 13">3.1.1.4</ecNumber>
    </alternativeName>
    <alternativeName>
        <fullName>Desnutrin</fullName>
    </alternativeName>
    <alternativeName>
        <fullName evidence="26">Pigment epithelium-derived factor receptor</fullName>
        <shortName evidence="26">PEDF-R</shortName>
    </alternativeName>
    <alternativeName>
        <fullName evidence="27">TTS2.2</fullName>
    </alternativeName>
    <alternativeName>
        <fullName>Transport-secretion protein 2</fullName>
        <shortName>TTS2</shortName>
    </alternativeName>
</protein>
<reference key="1">
    <citation type="journal article" date="2004" name="Science">
        <title>Fat mobilization in adipose tissue is promoted by adipose triglyceride lipase.</title>
        <authorList>
            <person name="Zimmermann R."/>
            <person name="Strauss J.G."/>
            <person name="Haemmerle G."/>
            <person name="Schoiswohl G."/>
            <person name="Birner-Gruenberger R."/>
            <person name="Riederer M."/>
            <person name="Lass A."/>
            <person name="Neuberger G."/>
            <person name="Eisenhaber F."/>
            <person name="Hermetter A."/>
            <person name="Zechner R."/>
        </authorList>
    </citation>
    <scope>NUCLEOTIDE SEQUENCE [MRNA] (ISOFORM 1)</scope>
    <scope>FUNCTION</scope>
    <scope>TISSUE SPECIFICITY</scope>
    <scope>CATALYTIC ACTIVITY</scope>
</reference>
<reference key="2">
    <citation type="submission" date="2000-06" db="EMBL/GenBank/DDBJ databases">
        <title>TTS-2, a novel protein implicated in vesicular transport of the cell surface receptor ICAM-3.</title>
        <authorList>
            <person name="Strahl T."/>
            <person name="Shingler W.H."/>
            <person name="Lammiman M."/>
            <person name="Gregory C.D."/>
            <person name="Leach L."/>
            <person name="Matthias P."/>
            <person name="Nielsen P.J."/>
            <person name="Shaw P.E."/>
        </authorList>
    </citation>
    <scope>NUCLEOTIDE SEQUENCE [MRNA] (ISOFORM 1)</scope>
    <scope>VARIANT PRO-481</scope>
</reference>
<reference key="3">
    <citation type="journal article" date="2004" name="Proc. Natl. Acad. Sci. U.S.A.">
        <title>Large-scale cDNA transfection screening for genes related to cancer development and progression.</title>
        <authorList>
            <person name="Wan D."/>
            <person name="Gong Y."/>
            <person name="Qin W."/>
            <person name="Zhang P."/>
            <person name="Li J."/>
            <person name="Wei L."/>
            <person name="Zhou X."/>
            <person name="Li H."/>
            <person name="Qiu X."/>
            <person name="Zhong F."/>
            <person name="He L."/>
            <person name="Yu J."/>
            <person name="Yao G."/>
            <person name="Jiang H."/>
            <person name="Qian L."/>
            <person name="Yu Y."/>
            <person name="Shu H."/>
            <person name="Chen X."/>
            <person name="Xu H."/>
            <person name="Guo M."/>
            <person name="Pan Z."/>
            <person name="Chen Y."/>
            <person name="Ge C."/>
            <person name="Yang S."/>
            <person name="Gu J."/>
        </authorList>
    </citation>
    <scope>NUCLEOTIDE SEQUENCE [LARGE SCALE MRNA] (ISOFORM 2)</scope>
</reference>
<reference key="4">
    <citation type="journal article" date="2006" name="Nature">
        <title>Human chromosome 11 DNA sequence and analysis including novel gene identification.</title>
        <authorList>
            <person name="Taylor T.D."/>
            <person name="Noguchi H."/>
            <person name="Totoki Y."/>
            <person name="Toyoda A."/>
            <person name="Kuroki Y."/>
            <person name="Dewar K."/>
            <person name="Lloyd C."/>
            <person name="Itoh T."/>
            <person name="Takeda T."/>
            <person name="Kim D.-W."/>
            <person name="She X."/>
            <person name="Barlow K.F."/>
            <person name="Bloom T."/>
            <person name="Bruford E."/>
            <person name="Chang J.L."/>
            <person name="Cuomo C.A."/>
            <person name="Eichler E."/>
            <person name="FitzGerald M.G."/>
            <person name="Jaffe D.B."/>
            <person name="LaButti K."/>
            <person name="Nicol R."/>
            <person name="Park H.-S."/>
            <person name="Seaman C."/>
            <person name="Sougnez C."/>
            <person name="Yang X."/>
            <person name="Zimmer A.R."/>
            <person name="Zody M.C."/>
            <person name="Birren B.W."/>
            <person name="Nusbaum C."/>
            <person name="Fujiyama A."/>
            <person name="Hattori M."/>
            <person name="Rogers J."/>
            <person name="Lander E.S."/>
            <person name="Sakaki Y."/>
        </authorList>
    </citation>
    <scope>NUCLEOTIDE SEQUENCE [LARGE SCALE GENOMIC DNA]</scope>
</reference>
<reference key="5">
    <citation type="journal article" date="2004" name="Genome Res.">
        <title>The status, quality, and expansion of the NIH full-length cDNA project: the Mammalian Gene Collection (MGC).</title>
        <authorList>
            <consortium name="The MGC Project Team"/>
        </authorList>
    </citation>
    <scope>NUCLEOTIDE SEQUENCE [LARGE SCALE MRNA] (ISOFORM 1)</scope>
    <scope>VARIANT PRO-481</scope>
    <source>
        <tissue>Brain</tissue>
        <tissue>Eye</tissue>
    </source>
</reference>
<reference key="6">
    <citation type="submission" date="1998-03" db="EMBL/GenBank/DDBJ databases">
        <authorList>
            <person name="Yu W."/>
            <person name="Gibbs R.A."/>
        </authorList>
    </citation>
    <scope>NUCLEOTIDE SEQUENCE [LARGE SCALE MRNA] OF 94-504 (ISOFORM 1)</scope>
    <source>
        <tissue>Brain</tissue>
    </source>
</reference>
<reference key="7">
    <citation type="journal article" date="2004" name="J. Biol. Chem.">
        <title>Identification, cloning, expression, and purification of three novel human calcium-independent phospholipase A2 family members possessing triacylglycerol lipase and acylglycerol transacylase activities.</title>
        <authorList>
            <person name="Jenkins C.M."/>
            <person name="Mancuso D.J."/>
            <person name="Yan W."/>
            <person name="Sims H.F."/>
            <person name="Gibson B."/>
            <person name="Gross R.W."/>
        </authorList>
    </citation>
    <scope>FUNCTION</scope>
    <scope>ACTIVITY REGULATION</scope>
    <scope>CATALYTIC ACTIVITY</scope>
</reference>
<reference key="8">
    <citation type="journal article" date="2005" name="Diabetes">
        <title>Adipocyte lipases and defect of lipolysis in human obesity.</title>
        <authorList>
            <person name="Langin D."/>
            <person name="Dicker A."/>
            <person name="Tavernier G."/>
            <person name="Hoffstedt J."/>
            <person name="Mairal A."/>
            <person name="Ryden M."/>
            <person name="Arner E."/>
            <person name="Sicard A."/>
            <person name="Jenkins C.M."/>
            <person name="Viguerie N."/>
            <person name="van Harmelen V."/>
            <person name="Gross R.W."/>
            <person name="Holm C."/>
            <person name="Arner P."/>
        </authorList>
    </citation>
    <scope>DEVELOPMENTAL STAGE</scope>
    <scope>TISSUE SPECIFICITY</scope>
</reference>
<reference key="9">
    <citation type="journal article" date="2005" name="J. Lipid Res.">
        <title>Expression, regulation, and triglyceride hydrolase activity of Adiponutrin family members.</title>
        <authorList>
            <person name="Lake A.C."/>
            <person name="Sun Y."/>
            <person name="Li J.-L."/>
            <person name="Kim J.E."/>
            <person name="Johnson J.W."/>
            <person name="Li D."/>
            <person name="Revett T."/>
            <person name="Shih H.H."/>
            <person name="Liu W."/>
            <person name="Paulsen J.E."/>
            <person name="Gimeno R.E."/>
        </authorList>
    </citation>
    <scope>TISSUE SPECIFICITY</scope>
    <scope>MUTAGENESIS OF SER-47</scope>
    <scope>CATALYTIC ACTIVITY</scope>
    <scope>FUNCTION</scope>
</reference>
<reference key="10">
    <citation type="journal article" date="2006" name="Am. J. Physiol.">
        <title>The adipose tissue triglyceride lipase ATGL/PNPLA2 is downregulated by insulin and TNF-alpha in 3T3-L1 adipocytes and is a target for transactivation by PPARgamma.</title>
        <authorList>
            <person name="Kim J.Y."/>
            <person name="Tillison K."/>
            <person name="Lee J.-H."/>
            <person name="Rearick D.A."/>
            <person name="Smas C.M."/>
        </authorList>
    </citation>
    <scope>DEVELOPMENTAL STAGE</scope>
</reference>
<reference key="11">
    <citation type="journal article" date="2006" name="EMBO Rep.">
        <title>ATGL has a key role in lipid droplet/adiposome degradation in mammalian cells.</title>
        <authorList>
            <person name="Smirnova E."/>
            <person name="Goldberg E.B."/>
            <person name="Makarova K.S."/>
            <person name="Lin L."/>
            <person name="Brown W.J."/>
            <person name="Jackson C.L."/>
        </authorList>
    </citation>
    <scope>FUNCTION</scope>
    <scope>SUBCELLULAR LOCATION</scope>
    <scope>MUTAGENESIS OF SER-47</scope>
    <scope>CATALYTIC ACTIVITY</scope>
</reference>
<reference key="12">
    <citation type="journal article" date="2006" name="J. Biol. Chem.">
        <title>Identification of a lipase-linked cell membrane receptor for pigment epithelium-derived factor.</title>
        <authorList>
            <person name="Notari L."/>
            <person name="Baladron V."/>
            <person name="Aroca-Aguilar J.D."/>
            <person name="Balko N."/>
            <person name="Heredia R."/>
            <person name="Meyer C."/>
            <person name="Notario P.M."/>
            <person name="Saravanamuthu S."/>
            <person name="Nueda M.-L."/>
            <person name="Sanchez-Sanchez F."/>
            <person name="Escribano J."/>
            <person name="Laborda J."/>
            <person name="Becerra S.P."/>
        </authorList>
    </citation>
    <scope>ACTIVITY REGULATION</scope>
    <scope>BIOPHYSICOCHEMICAL PROPERTIES</scope>
    <scope>INTERACTION WITH SERPINF1</scope>
    <scope>SUBCELLULAR LOCATION</scope>
    <scope>TISSUE SPECIFICITY</scope>
    <scope>DEVELOPMENTAL STAGE</scope>
    <scope>FUNCTION</scope>
    <scope>CATALYTIC ACTIVITY</scope>
    <scope>TOPOLOGY</scope>
</reference>
<reference key="13">
    <citation type="journal article" date="2007" name="Biochem. Biophys. Res. Commun.">
        <title>A comparative study of human GS2, its paralogues, and its rat orthologue.</title>
        <authorList>
            <person name="Gao J.G."/>
            <person name="Simon M."/>
        </authorList>
    </citation>
    <scope>CATALYTIC ACTIVITY</scope>
    <scope>FUNCTION</scope>
</reference>
<reference key="14">
    <citation type="journal article" date="2008" name="Proc. Natl. Acad. Sci. U.S.A.">
        <title>A quantitative atlas of mitotic phosphorylation.</title>
        <authorList>
            <person name="Dephoure N."/>
            <person name="Zhou C."/>
            <person name="Villen J."/>
            <person name="Beausoleil S.A."/>
            <person name="Bakalarski C.E."/>
            <person name="Elledge S.J."/>
            <person name="Gygi S.P."/>
        </authorList>
    </citation>
    <scope>IDENTIFICATION BY MASS SPECTROMETRY [LARGE SCALE ANALYSIS]</scope>
    <source>
        <tissue>Cervix carcinoma</tissue>
    </source>
</reference>
<reference key="15">
    <citation type="journal article" date="2011" name="Sci. Signal.">
        <title>System-wide temporal characterization of the proteome and phosphoproteome of human embryonic stem cell differentiation.</title>
        <authorList>
            <person name="Rigbolt K.T."/>
            <person name="Prokhorova T.A."/>
            <person name="Akimov V."/>
            <person name="Henningsen J."/>
            <person name="Johansen P.T."/>
            <person name="Kratchmarova I."/>
            <person name="Kassem M."/>
            <person name="Mann M."/>
            <person name="Olsen J.V."/>
            <person name="Blagoev B."/>
        </authorList>
    </citation>
    <scope>PHOSPHORYLATION [LARGE SCALE ANALYSIS] AT SER-428</scope>
    <scope>IDENTIFICATION BY MASS SPECTROMETRY [LARGE SCALE ANALYSIS]</scope>
</reference>
<reference key="16">
    <citation type="journal article" date="2012" name="Endocrinology">
        <title>Identification and functional characterization of protein kinase A phosphorylation sites in the major lipolytic protein, adipose triglyceride lipase.</title>
        <authorList>
            <person name="Pagnon J."/>
            <person name="Matzaris M."/>
            <person name="Stark R."/>
            <person name="Meex R.C."/>
            <person name="Macaulay S.L."/>
            <person name="Brown W."/>
            <person name="O'Brien P.E."/>
            <person name="Tiganis T."/>
            <person name="Watt M.J."/>
        </authorList>
    </citation>
    <scope>PHOSPHORYLATION AT SER-404</scope>
</reference>
<reference key="17">
    <citation type="journal article" date="2013" name="J. Proteome Res.">
        <title>Toward a comprehensive characterization of a human cancer cell phosphoproteome.</title>
        <authorList>
            <person name="Zhou H."/>
            <person name="Di Palma S."/>
            <person name="Preisinger C."/>
            <person name="Peng M."/>
            <person name="Polat A.N."/>
            <person name="Heck A.J."/>
            <person name="Mohammed S."/>
        </authorList>
    </citation>
    <scope>PHOSPHORYLATION [LARGE SCALE ANALYSIS] AT SER-404 AND SER-428</scope>
    <scope>IDENTIFICATION BY MASS SPECTROMETRY [LARGE SCALE ANALYSIS]</scope>
    <source>
        <tissue>Cervix carcinoma</tissue>
        <tissue>Erythroleukemia</tissue>
    </source>
</reference>
<reference key="18">
    <citation type="journal article" date="2013" name="Proc. Natl. Acad. Sci. U.S.A.">
        <title>Spatial regulation of UBXD8 and p97/VCP controls ATGL-mediated lipid droplet turnover.</title>
        <authorList>
            <person name="Olzmann J.A."/>
            <person name="Richter C.M."/>
            <person name="Kopito R.R."/>
        </authorList>
    </citation>
    <scope>INTERACTION WITH FAF2</scope>
</reference>
<reference key="19">
    <citation type="journal article" date="2014" name="J. Proteomics">
        <title>An enzyme assisted RP-RPLC approach for in-depth analysis of human liver phosphoproteome.</title>
        <authorList>
            <person name="Bian Y."/>
            <person name="Song C."/>
            <person name="Cheng K."/>
            <person name="Dong M."/>
            <person name="Wang F."/>
            <person name="Huang J."/>
            <person name="Sun D."/>
            <person name="Wang L."/>
            <person name="Ye M."/>
            <person name="Zou H."/>
        </authorList>
    </citation>
    <scope>PHOSPHORYLATION [LARGE SCALE ANALYSIS] AT SER-428</scope>
    <scope>IDENTIFICATION BY MASS SPECTROMETRY [LARGE SCALE ANALYSIS]</scope>
    <source>
        <tissue>Liver</tissue>
    </source>
</reference>
<reference key="20">
    <citation type="journal article" date="2015" name="Cell">
        <title>A single kinase generates the majority of the secreted phosphoproteome.</title>
        <authorList>
            <person name="Tagliabracci V.S."/>
            <person name="Wiley S.E."/>
            <person name="Guo X."/>
            <person name="Kinch L.N."/>
            <person name="Durrant E."/>
            <person name="Wen J."/>
            <person name="Xiao J."/>
            <person name="Cui J."/>
            <person name="Nguyen K.B."/>
            <person name="Engel J.L."/>
            <person name="Coon J.J."/>
            <person name="Grishin N."/>
            <person name="Pinna L.A."/>
            <person name="Pagliarini D.J."/>
            <person name="Dixon J.E."/>
        </authorList>
    </citation>
    <scope>PHOSPHORYLATION AT SER-404</scope>
</reference>
<reference key="21">
    <citation type="journal article" date="2017" name="Sci. Rep.">
        <title>Lipid Droplet-Associated Hydrolase Promotes Lipid Droplet Fusion and Enhances ATGL Degradation and Triglyceride Accumulation.</title>
        <authorList>
            <person name="Goo Y.H."/>
            <person name="Son S.H."/>
            <person name="Paul A."/>
        </authorList>
    </citation>
    <scope>FUNCTION</scope>
    <scope>SUBCELLULAR LOCATION</scope>
    <scope>UBIQUITINATION</scope>
</reference>
<reference key="22">
    <citation type="journal article" date="2021" name="Nat. Metab.">
        <title>Peroxisomal beta-oxidation acts as a sensor for intracellular fatty acids and regulates lipolysis.</title>
        <authorList>
            <person name="Ding L."/>
            <person name="Sun W."/>
            <person name="Balaz M."/>
            <person name="He A."/>
            <person name="Klug M."/>
            <person name="Wieland S."/>
            <person name="Caiazzo R."/>
            <person name="Raverdy V."/>
            <person name="Pattou F."/>
            <person name="Lefebvre P."/>
            <person name="Lodhi I.J."/>
            <person name="Staels B."/>
            <person name="Heim M."/>
            <person name="Wolfrum C."/>
        </authorList>
    </citation>
    <scope>FUNCTION</scope>
    <scope>SUBCELLULAR LOCATION</scope>
    <scope>UBIQUITINATION AT LYS-92</scope>
    <scope>MUTAGENESIS OF LYS-92</scope>
</reference>
<reference key="23">
    <citation type="journal article" date="2022" name="Nature">
        <title>ATGL is a biosynthetic enzyme for fatty acid esters of hydroxy fatty acids.</title>
        <authorList>
            <person name="Patel R."/>
            <person name="Santoro A."/>
            <person name="Hofer P."/>
            <person name="Tan D."/>
            <person name="Oberer M."/>
            <person name="Nelson A.T."/>
            <person name="Konduri S."/>
            <person name="Siegel D."/>
            <person name="Zechner R."/>
            <person name="Saghatelian A."/>
            <person name="Kahn B.B."/>
        </authorList>
    </citation>
    <scope>FUNCTION</scope>
    <scope>CATALYTIC ACTIVITY</scope>
</reference>
<reference key="24">
    <citation type="journal article" date="2006" name="Diabetes">
        <title>The ATGL gene is associated with free fatty acids, triglycerides, and type 2 diabetes.</title>
        <authorList>
            <person name="Schoenborn V."/>
            <person name="Heid I.M."/>
            <person name="Vollmert C."/>
            <person name="Lingenhel A."/>
            <person name="Adams T.D."/>
            <person name="Hopkins P.N."/>
            <person name="Illig T."/>
            <person name="Zimmermann R."/>
            <person name="Zechner R."/>
            <person name="Hunt S.C."/>
            <person name="Kronenberg F."/>
        </authorList>
    </citation>
    <scope>VARIANTS PHE-219; LYS-252 AND PRO-481</scope>
    <scope>POLYMORPHISM</scope>
    <scope>ASSOCIATION WITH DIABETES MELLITUS TYPE 2</scope>
</reference>
<reference key="25">
    <citation type="journal article" date="2007" name="Nat. Genet.">
        <title>The gene encoding adipose triglyceride lipase (PNPLA2) is mutated in neutral lipid storage disease with myopathy.</title>
        <authorList>
            <person name="Fischer J."/>
            <person name="Lefevre C."/>
            <person name="Morava E."/>
            <person name="Mussini J.-M."/>
            <person name="Laforet P."/>
            <person name="Negre-Salvayre A."/>
            <person name="Lathrop M."/>
            <person name="Salvayre R."/>
        </authorList>
    </citation>
    <scope>VARIANT NLSDM LEU-195</scope>
</reference>
<comment type="function">
    <text evidence="1 5 7 8 9 13 15 19 20 21">Catalyzes the initial step in triglyceride hydrolysis in adipocyte and non-adipocyte lipid droplets (PubMed:15364929, PubMed:15550674, PubMed:16150821, PubMed:16239926, PubMed:17603008, PubMed:34903883). Exhibits a strong preference for the hydrolysis of long-chain fatty acid esters at the sn-2 position of the glycerol backbone and acts coordinately with LIPE/HLS and DGAT2 within the lipolytic cascade (By similarity). Also possesses acylglycerol transacylase and phospholipase A2 activities (PubMed:15364929, PubMed:17032652, PubMed:17603008). Transfers fatty acid from triglyceride to retinol, hydrolyzes retinylesters, and generates 1,3-diacylglycerol from triglycerides (PubMed:17603008). Regulates adiposome size and may be involved in the degradation of adiposomes (PubMed:16239926). Catalyzes the formation of an ester bond between hydroxy fatty acids and fatty acids derived from triglycerides or diglycerides to generate fatty acid esters of hydroxy fatty acids (FAHFAs) in adipocytes (PubMed:35676490). Acts antagonistically with LDAH in regulation of cellular lipid stores (PubMed:28578400). Inhibits LDAH-stimulated lipid droplet fusion (PubMed:28578400). May play an important role in energy homeostasis (By similarity). May play a role in the response of the organism to starvation, enhancing hydrolysis of triglycerides and providing free fatty acids to other tissues to be oxidized in situations of energy depletion (By similarity).</text>
</comment>
<comment type="catalytic activity">
    <reaction evidence="5 7 8 9 15">
        <text>a triacylglycerol + H2O = a diacylglycerol + a fatty acid + H(+)</text>
        <dbReference type="Rhea" id="RHEA:12044"/>
        <dbReference type="ChEBI" id="CHEBI:15377"/>
        <dbReference type="ChEBI" id="CHEBI:15378"/>
        <dbReference type="ChEBI" id="CHEBI:17855"/>
        <dbReference type="ChEBI" id="CHEBI:18035"/>
        <dbReference type="ChEBI" id="CHEBI:28868"/>
        <dbReference type="EC" id="3.1.1.3"/>
    </reaction>
    <physiologicalReaction direction="left-to-right" evidence="30 31 33">
        <dbReference type="Rhea" id="RHEA:12045"/>
    </physiologicalReaction>
</comment>
<comment type="catalytic activity">
    <reaction evidence="15">
        <text>a triacylglycerol + H2O = a 1,2-diacylglycerol + a fatty acid + H(+)</text>
        <dbReference type="Rhea" id="RHEA:35667"/>
        <dbReference type="ChEBI" id="CHEBI:15377"/>
        <dbReference type="ChEBI" id="CHEBI:15378"/>
        <dbReference type="ChEBI" id="CHEBI:17855"/>
        <dbReference type="ChEBI" id="CHEBI:28868"/>
        <dbReference type="ChEBI" id="CHEBI:49172"/>
    </reaction>
    <physiologicalReaction direction="left-to-right" evidence="33">
        <dbReference type="Rhea" id="RHEA:35668"/>
    </physiologicalReaction>
</comment>
<comment type="catalytic activity">
    <reaction evidence="15 30">
        <text>a triacylglycerol + H2O = a 1,3-diacylglycerol + a fatty acid + H(+)</text>
        <dbReference type="Rhea" id="RHEA:38495"/>
        <dbReference type="ChEBI" id="CHEBI:15377"/>
        <dbReference type="ChEBI" id="CHEBI:15378"/>
        <dbReference type="ChEBI" id="CHEBI:17855"/>
        <dbReference type="ChEBI" id="CHEBI:28868"/>
        <dbReference type="ChEBI" id="CHEBI:47777"/>
    </reaction>
    <physiologicalReaction direction="left-to-right" evidence="30 33">
        <dbReference type="Rhea" id="RHEA:38496"/>
    </physiologicalReaction>
</comment>
<comment type="catalytic activity">
    <reaction evidence="1">
        <text>a triacyl-sn-glycerol + H2O = a 1,3-diacyl-sn-glycerol + a fatty acid + H(+)</text>
        <dbReference type="Rhea" id="RHEA:43732"/>
        <dbReference type="ChEBI" id="CHEBI:15377"/>
        <dbReference type="ChEBI" id="CHEBI:15378"/>
        <dbReference type="ChEBI" id="CHEBI:28868"/>
        <dbReference type="ChEBI" id="CHEBI:64615"/>
        <dbReference type="ChEBI" id="CHEBI:77272"/>
    </reaction>
    <physiologicalReaction direction="left-to-right" evidence="1">
        <dbReference type="Rhea" id="RHEA:43733"/>
    </physiologicalReaction>
</comment>
<comment type="catalytic activity">
    <reaction evidence="1">
        <text>a triacyl-sn-glycerol + H2O = a 2,3-diacyl-sn-glycerol + a fatty acid + H(+)</text>
        <dbReference type="Rhea" id="RHEA:38499"/>
        <dbReference type="ChEBI" id="CHEBI:15377"/>
        <dbReference type="ChEBI" id="CHEBI:15378"/>
        <dbReference type="ChEBI" id="CHEBI:28868"/>
        <dbReference type="ChEBI" id="CHEBI:64615"/>
        <dbReference type="ChEBI" id="CHEBI:75524"/>
    </reaction>
    <physiologicalReaction direction="left-to-right" evidence="1">
        <dbReference type="Rhea" id="RHEA:38500"/>
    </physiologicalReaction>
</comment>
<comment type="catalytic activity">
    <reaction evidence="5">
        <text>a 1-acylglycerol + a 1,3-diacylglycerol = a triacylglycerol + glycerol</text>
        <dbReference type="Rhea" id="RHEA:44440"/>
        <dbReference type="ChEBI" id="CHEBI:17754"/>
        <dbReference type="ChEBI" id="CHEBI:17855"/>
        <dbReference type="ChEBI" id="CHEBI:35759"/>
        <dbReference type="ChEBI" id="CHEBI:47777"/>
    </reaction>
    <physiologicalReaction direction="left-to-right" evidence="29">
        <dbReference type="Rhea" id="RHEA:44441"/>
    </physiologicalReaction>
</comment>
<comment type="catalytic activity">
    <reaction evidence="5">
        <text>a 1-acylglycerol + a 1,2-diacylglycerol = a triacylglycerol + glycerol</text>
        <dbReference type="Rhea" id="RHEA:44436"/>
        <dbReference type="ChEBI" id="CHEBI:17754"/>
        <dbReference type="ChEBI" id="CHEBI:17855"/>
        <dbReference type="ChEBI" id="CHEBI:35759"/>
        <dbReference type="ChEBI" id="CHEBI:49172"/>
    </reaction>
    <physiologicalReaction direction="left-to-right" evidence="29">
        <dbReference type="Rhea" id="RHEA:44437"/>
    </physiologicalReaction>
</comment>
<comment type="catalytic activity">
    <reaction evidence="5">
        <text>2 a 1-acylglycerol = a 1,2-diacylglycerol + glycerol</text>
        <dbReference type="Rhea" id="RHEA:44432"/>
        <dbReference type="ChEBI" id="CHEBI:17754"/>
        <dbReference type="ChEBI" id="CHEBI:35759"/>
        <dbReference type="ChEBI" id="CHEBI:49172"/>
    </reaction>
    <physiologicalReaction direction="left-to-right" evidence="29">
        <dbReference type="Rhea" id="RHEA:44433"/>
    </physiologicalReaction>
</comment>
<comment type="catalytic activity">
    <reaction evidence="15">
        <text>a triacylglycerol + all-trans-retinol = an all-trans-retinyl ester + a diacylglycerol</text>
        <dbReference type="Rhea" id="RHEA:44676"/>
        <dbReference type="ChEBI" id="CHEBI:17336"/>
        <dbReference type="ChEBI" id="CHEBI:17855"/>
        <dbReference type="ChEBI" id="CHEBI:18035"/>
        <dbReference type="ChEBI" id="CHEBI:63410"/>
    </reaction>
    <physiologicalReaction direction="left-to-right" evidence="33">
        <dbReference type="Rhea" id="RHEA:44677"/>
    </physiologicalReaction>
</comment>
<comment type="catalytic activity">
    <reaction evidence="15 30">
        <text>1,2-di-(9Z-octadecenoyl)-glycerol + (9Z)-octadecenoate + H(+) = 1,2,3-tri-(9Z-octadecenoyl)-glycerol + H2O</text>
        <dbReference type="Rhea" id="RHEA:38379"/>
        <dbReference type="ChEBI" id="CHEBI:15377"/>
        <dbReference type="ChEBI" id="CHEBI:15378"/>
        <dbReference type="ChEBI" id="CHEBI:30823"/>
        <dbReference type="ChEBI" id="CHEBI:52323"/>
        <dbReference type="ChEBI" id="CHEBI:53753"/>
    </reaction>
    <physiologicalReaction direction="right-to-left" evidence="30 33">
        <dbReference type="Rhea" id="RHEA:38381"/>
    </physiologicalReaction>
</comment>
<comment type="catalytic activity">
    <reaction evidence="15">
        <text>1,2,3-tri-(9Z-octadecenoyl)-glycerol + H2O = 1,3-di-(9Z-octadecenoyl)-glycerol + (9Z)-octadecenoate + H(+)</text>
        <dbReference type="Rhea" id="RHEA:38387"/>
        <dbReference type="ChEBI" id="CHEBI:15377"/>
        <dbReference type="ChEBI" id="CHEBI:15378"/>
        <dbReference type="ChEBI" id="CHEBI:30823"/>
        <dbReference type="ChEBI" id="CHEBI:53753"/>
        <dbReference type="ChEBI" id="CHEBI:75735"/>
    </reaction>
    <physiologicalReaction direction="left-to-right" evidence="33">
        <dbReference type="Rhea" id="RHEA:38388"/>
    </physiologicalReaction>
</comment>
<comment type="catalytic activity">
    <reaction evidence="5">
        <text>1-(9Z-octadecenoyl)-glycerol + 1,3-di-(9Z-octadecenoyl)-glycerol = 1,2,3-tri-(9Z-octadecenoyl)-glycerol + glycerol</text>
        <dbReference type="Rhea" id="RHEA:38331"/>
        <dbReference type="ChEBI" id="CHEBI:17754"/>
        <dbReference type="ChEBI" id="CHEBI:53753"/>
        <dbReference type="ChEBI" id="CHEBI:75342"/>
        <dbReference type="ChEBI" id="CHEBI:75735"/>
    </reaction>
    <physiologicalReaction direction="left-to-right" evidence="29">
        <dbReference type="Rhea" id="RHEA:38332"/>
    </physiologicalReaction>
</comment>
<comment type="catalytic activity">
    <reaction evidence="5">
        <text>1-(9Z-octadecenoyl)-glycerol + 1,2-di-(9Z-octadecenoyl)-glycerol = 1,2,3-tri-(9Z-octadecenoyl)-glycerol + glycerol</text>
        <dbReference type="Rhea" id="RHEA:38327"/>
        <dbReference type="ChEBI" id="CHEBI:17754"/>
        <dbReference type="ChEBI" id="CHEBI:52323"/>
        <dbReference type="ChEBI" id="CHEBI:53753"/>
        <dbReference type="ChEBI" id="CHEBI:75342"/>
    </reaction>
    <physiologicalReaction direction="left-to-right" evidence="29">
        <dbReference type="Rhea" id="RHEA:38328"/>
    </physiologicalReaction>
</comment>
<comment type="catalytic activity">
    <reaction evidence="5">
        <text>2 1-(9Z-octadecenoyl)-glycerol = 1,2-di-(9Z-octadecenoyl)-glycerol + glycerol</text>
        <dbReference type="Rhea" id="RHEA:38323"/>
        <dbReference type="ChEBI" id="CHEBI:17754"/>
        <dbReference type="ChEBI" id="CHEBI:52323"/>
        <dbReference type="ChEBI" id="CHEBI:75342"/>
    </reaction>
    <physiologicalReaction direction="left-to-right" evidence="29">
        <dbReference type="Rhea" id="RHEA:38324"/>
    </physiologicalReaction>
</comment>
<comment type="catalytic activity">
    <reaction evidence="15">
        <text>1,2,3-tri-(9Z-octadecenoyl)-glycerol + all-trans-retinol = all-trans-retinyl 9Z-octadecenoate + di-(9Z)-octadecenoylglycerol</text>
        <dbReference type="Rhea" id="RHEA:39987"/>
        <dbReference type="ChEBI" id="CHEBI:17336"/>
        <dbReference type="ChEBI" id="CHEBI:53753"/>
        <dbReference type="ChEBI" id="CHEBI:70760"/>
        <dbReference type="ChEBI" id="CHEBI:75945"/>
    </reaction>
    <physiologicalReaction direction="left-to-right" evidence="33">
        <dbReference type="Rhea" id="RHEA:39988"/>
    </physiologicalReaction>
</comment>
<comment type="catalytic activity">
    <reaction evidence="1">
        <text>1,2,3-tri-(9Z)-hexadecenoylglycerol + H2O = 1,3-di-(9Z)-hexadecenoylglycerol + (9Z)-hexadecenoate + H(+)</text>
        <dbReference type="Rhea" id="RHEA:38395"/>
        <dbReference type="ChEBI" id="CHEBI:15377"/>
        <dbReference type="ChEBI" id="CHEBI:15378"/>
        <dbReference type="ChEBI" id="CHEBI:32372"/>
        <dbReference type="ChEBI" id="CHEBI:75841"/>
        <dbReference type="ChEBI" id="CHEBI:75849"/>
    </reaction>
    <physiologicalReaction direction="left-to-right" evidence="1">
        <dbReference type="Rhea" id="RHEA:38396"/>
    </physiologicalReaction>
</comment>
<comment type="catalytic activity">
    <reaction evidence="1">
        <text>1,2,3-tri-(9Z,12Z)-octadecadienoylglycerol + H2O = 1,3-di-(9Z,12Z)-octadecadienoylglycerol + (9Z,12Z)-octadecadienoate + H(+)</text>
        <dbReference type="Rhea" id="RHEA:38403"/>
        <dbReference type="ChEBI" id="CHEBI:15377"/>
        <dbReference type="ChEBI" id="CHEBI:15378"/>
        <dbReference type="ChEBI" id="CHEBI:30245"/>
        <dbReference type="ChEBI" id="CHEBI:75844"/>
        <dbReference type="ChEBI" id="CHEBI:75850"/>
    </reaction>
    <physiologicalReaction direction="left-to-right" evidence="1">
        <dbReference type="Rhea" id="RHEA:38404"/>
    </physiologicalReaction>
</comment>
<comment type="catalytic activity">
    <reaction evidence="1">
        <text>1,2,3-tri-(9Z,12Z,15Z)-octadecatrienoylglycerol + H2O = 1,3-di-(9Z,12Z,15Z)-octadecatrienoylglycerol + (9Z,12Z,15Z)-octadecatrienoate + H(+)</text>
        <dbReference type="Rhea" id="RHEA:38411"/>
        <dbReference type="ChEBI" id="CHEBI:15377"/>
        <dbReference type="ChEBI" id="CHEBI:15378"/>
        <dbReference type="ChEBI" id="CHEBI:32387"/>
        <dbReference type="ChEBI" id="CHEBI:75845"/>
        <dbReference type="ChEBI" id="CHEBI:75852"/>
    </reaction>
    <physiologicalReaction direction="left-to-right" evidence="1">
        <dbReference type="Rhea" id="RHEA:38412"/>
    </physiologicalReaction>
</comment>
<comment type="catalytic activity">
    <reaction evidence="1">
        <text>1,3-di-(9Z)-octadecenoyl-2-hexadecanoylglycerol + H2O = 1,3-di-(9Z-octadecenoyl)-glycerol + hexadecanoate + H(+)</text>
        <dbReference type="Rhea" id="RHEA:38419"/>
        <dbReference type="ChEBI" id="CHEBI:7896"/>
        <dbReference type="ChEBI" id="CHEBI:15377"/>
        <dbReference type="ChEBI" id="CHEBI:15378"/>
        <dbReference type="ChEBI" id="CHEBI:75735"/>
        <dbReference type="ChEBI" id="CHEBI:75846"/>
    </reaction>
    <physiologicalReaction direction="left-to-right" evidence="1">
        <dbReference type="Rhea" id="RHEA:38420"/>
    </physiologicalReaction>
</comment>
<comment type="catalytic activity">
    <reaction evidence="1">
        <text>1,2-di-(9Z)-octadecenoyl-3-hexadecanoyl-sn-glycerol + H2O = 1-(9Z)-octadecenoyl-3-hexadecanoyl-sn-glycerol + (9Z)-octadecenoate + H(+)</text>
        <dbReference type="Rhea" id="RHEA:38423"/>
        <dbReference type="ChEBI" id="CHEBI:15377"/>
        <dbReference type="ChEBI" id="CHEBI:15378"/>
        <dbReference type="ChEBI" id="CHEBI:30823"/>
        <dbReference type="ChEBI" id="CHEBI:75583"/>
        <dbReference type="ChEBI" id="CHEBI:75867"/>
    </reaction>
    <physiologicalReaction direction="left-to-right" evidence="1">
        <dbReference type="Rhea" id="RHEA:38424"/>
    </physiologicalReaction>
</comment>
<comment type="catalytic activity">
    <reaction evidence="1">
        <text>1-hexadecanoyl-2,3-di-(9Z)-octadecenoyl-sn-glycerol + H2O = 1-hexadecanoyl-3-(9Z)-octadecenoyl-sn-glycerol + (9Z)-octadecenoate + H(+)</text>
        <dbReference type="Rhea" id="RHEA:38647"/>
        <dbReference type="ChEBI" id="CHEBI:15377"/>
        <dbReference type="ChEBI" id="CHEBI:15378"/>
        <dbReference type="ChEBI" id="CHEBI:30823"/>
        <dbReference type="ChEBI" id="CHEBI:75847"/>
        <dbReference type="ChEBI" id="CHEBI:75868"/>
    </reaction>
    <physiologicalReaction direction="left-to-right" evidence="1">
        <dbReference type="Rhea" id="RHEA:38648"/>
    </physiologicalReaction>
</comment>
<comment type="catalytic activity">
    <reaction evidence="1">
        <text>1,2,3-tri-(9Z-octadecenoyl)-glycerol + H2O = 2,3-di-(9Z)-octadecenoyl-sn-glycerol + (9Z)-octadecenoate + H(+)</text>
        <dbReference type="Rhea" id="RHEA:38391"/>
        <dbReference type="ChEBI" id="CHEBI:15377"/>
        <dbReference type="ChEBI" id="CHEBI:15378"/>
        <dbReference type="ChEBI" id="CHEBI:30823"/>
        <dbReference type="ChEBI" id="CHEBI:53753"/>
        <dbReference type="ChEBI" id="CHEBI:75824"/>
    </reaction>
    <physiologicalReaction direction="left-to-right" evidence="1">
        <dbReference type="Rhea" id="RHEA:38392"/>
    </physiologicalReaction>
</comment>
<comment type="catalytic activity">
    <reaction evidence="1">
        <text>1,2,3-tri-(9Z)-hexadecenoylglycerol + H2O = 2,3-di-(9Z)-hexadecenoyl-sn-glycerol + (9Z)-hexadecenoate + H(+)</text>
        <dbReference type="Rhea" id="RHEA:38399"/>
        <dbReference type="ChEBI" id="CHEBI:15377"/>
        <dbReference type="ChEBI" id="CHEBI:15378"/>
        <dbReference type="ChEBI" id="CHEBI:32372"/>
        <dbReference type="ChEBI" id="CHEBI:75841"/>
        <dbReference type="ChEBI" id="CHEBI:75853"/>
    </reaction>
    <physiologicalReaction direction="left-to-right" evidence="1">
        <dbReference type="Rhea" id="RHEA:38400"/>
    </physiologicalReaction>
</comment>
<comment type="catalytic activity">
    <reaction evidence="1">
        <text>1,2,3-tri-(9Z,12Z)-octadecadienoylglycerol + H2O = 2,3-di-(9Z,12Z)-octadecadienoyl-sn-glycerol + (9Z,12Z)-octadecadienoate + H(+)</text>
        <dbReference type="Rhea" id="RHEA:38407"/>
        <dbReference type="ChEBI" id="CHEBI:15377"/>
        <dbReference type="ChEBI" id="CHEBI:15378"/>
        <dbReference type="ChEBI" id="CHEBI:30245"/>
        <dbReference type="ChEBI" id="CHEBI:75844"/>
        <dbReference type="ChEBI" id="CHEBI:75854"/>
    </reaction>
    <physiologicalReaction direction="left-to-right" evidence="1">
        <dbReference type="Rhea" id="RHEA:38408"/>
    </physiologicalReaction>
</comment>
<comment type="catalytic activity">
    <reaction evidence="1">
        <text>1,2,3-tri-(9Z,12Z,15Z)-octadecatrienoylglycerol + H2O = 2,3-di-(9Z,12Z,15Z)-octadecatrienoyl-sn-glycerol + (9Z,12Z,15Z)-octadecatrienoate + H(+)</text>
        <dbReference type="Rhea" id="RHEA:38415"/>
        <dbReference type="ChEBI" id="CHEBI:15377"/>
        <dbReference type="ChEBI" id="CHEBI:15378"/>
        <dbReference type="ChEBI" id="CHEBI:32387"/>
        <dbReference type="ChEBI" id="CHEBI:75845"/>
        <dbReference type="ChEBI" id="CHEBI:75855"/>
    </reaction>
    <physiologicalReaction direction="left-to-right" evidence="1">
        <dbReference type="Rhea" id="RHEA:38416"/>
    </physiologicalReaction>
</comment>
<comment type="catalytic activity">
    <reaction evidence="1">
        <text>1,3-di-(9Z)-octadecenoyl-2-hexadecanoylglycerol + H2O = 2-hexadecanoyl-3-(9Z)-octadecenoyl-sn-glycerol + (9Z)-octadecenoate + H(+)</text>
        <dbReference type="Rhea" id="RHEA:38431"/>
        <dbReference type="ChEBI" id="CHEBI:15377"/>
        <dbReference type="ChEBI" id="CHEBI:15378"/>
        <dbReference type="ChEBI" id="CHEBI:30823"/>
        <dbReference type="ChEBI" id="CHEBI:75846"/>
        <dbReference type="ChEBI" id="CHEBI:75870"/>
    </reaction>
    <physiologicalReaction direction="left-to-right" evidence="1">
        <dbReference type="Rhea" id="RHEA:38432"/>
    </physiologicalReaction>
</comment>
<comment type="catalytic activity">
    <reaction evidence="1">
        <text>1-hexadecanoyl-2,3-di-(9Z)-octadecenoyl-sn-glycerol + H2O = 2,3-di-(9Z)-octadecenoyl-sn-glycerol + hexadecanoate + H(+)</text>
        <dbReference type="Rhea" id="RHEA:38427"/>
        <dbReference type="ChEBI" id="CHEBI:7896"/>
        <dbReference type="ChEBI" id="CHEBI:15377"/>
        <dbReference type="ChEBI" id="CHEBI:15378"/>
        <dbReference type="ChEBI" id="CHEBI:75824"/>
        <dbReference type="ChEBI" id="CHEBI:75847"/>
    </reaction>
    <physiologicalReaction direction="left-to-right" evidence="1">
        <dbReference type="Rhea" id="RHEA:38428"/>
    </physiologicalReaction>
</comment>
<comment type="catalytic activity">
    <reaction evidence="1">
        <text>1,2-di-(9Z)-octadecenoyl-3-hexadecanoyl-sn-glycerol + H2O = 2-(9Z-octadecenoyl)-3-hexadecanoyl-sn-glycerol + (9Z)-octadecenoate + H(+)</text>
        <dbReference type="Rhea" id="RHEA:38643"/>
        <dbReference type="ChEBI" id="CHEBI:15377"/>
        <dbReference type="ChEBI" id="CHEBI:15378"/>
        <dbReference type="ChEBI" id="CHEBI:30823"/>
        <dbReference type="ChEBI" id="CHEBI:75546"/>
        <dbReference type="ChEBI" id="CHEBI:75583"/>
    </reaction>
    <physiologicalReaction direction="left-to-right" evidence="1">
        <dbReference type="Rhea" id="RHEA:38644"/>
    </physiologicalReaction>
</comment>
<comment type="catalytic activity">
    <reaction evidence="5 13">
        <text>a 1,2-diacyl-sn-glycero-3-phosphocholine + H2O = a 1-acyl-sn-glycero-3-phosphocholine + a fatty acid + H(+)</text>
        <dbReference type="Rhea" id="RHEA:15801"/>
        <dbReference type="ChEBI" id="CHEBI:15377"/>
        <dbReference type="ChEBI" id="CHEBI:15378"/>
        <dbReference type="ChEBI" id="CHEBI:28868"/>
        <dbReference type="ChEBI" id="CHEBI:57643"/>
        <dbReference type="ChEBI" id="CHEBI:58168"/>
        <dbReference type="EC" id="3.1.1.4"/>
    </reaction>
    <physiologicalReaction direction="left-to-right" evidence="32">
        <dbReference type="Rhea" id="RHEA:15802"/>
    </physiologicalReaction>
</comment>
<comment type="catalytic activity">
    <reaction evidence="21">
        <text>1,2,3-tri-(9Z-octadecenoyl)-glycerol + 9-hydroxy-octadecanoate = 9-(9Z-octadecenoyloxy)-octadecanoate + 2,3-di-(9Z)-octadecenoyl-sn-glycerol</text>
        <dbReference type="Rhea" id="RHEA:75011"/>
        <dbReference type="ChEBI" id="CHEBI:53753"/>
        <dbReference type="ChEBI" id="CHEBI:75824"/>
        <dbReference type="ChEBI" id="CHEBI:136282"/>
        <dbReference type="ChEBI" id="CHEBI:136286"/>
    </reaction>
</comment>
<comment type="catalytic activity">
    <reaction evidence="21">
        <text>1-hexadecanoyl-2,3-di-(9Z)-octadecenoyl-sn-glycerol + 9-hydroxy-octadecanoate = 9-hexadecanoyloxy-octadecanoate + 2,3-di-(9Z)-octadecenoyl-sn-glycerol</text>
        <dbReference type="Rhea" id="RHEA:75015"/>
        <dbReference type="ChEBI" id="CHEBI:75824"/>
        <dbReference type="ChEBI" id="CHEBI:75847"/>
        <dbReference type="ChEBI" id="CHEBI:83670"/>
        <dbReference type="ChEBI" id="CHEBI:136286"/>
    </reaction>
</comment>
<comment type="catalytic activity">
    <reaction evidence="21">
        <text>1,2,3-tri-(10Z)-heptadecenoylglycerol + 9-hydroxy-octadecanoate = 2,3-di-(10Z-heptadecenoyl)-sn-glycerol + 9-(10Z-heptadecenoyloxy)-octadecanoate</text>
        <dbReference type="Rhea" id="RHEA:75019"/>
        <dbReference type="ChEBI" id="CHEBI:136286"/>
        <dbReference type="ChEBI" id="CHEBI:194143"/>
        <dbReference type="ChEBI" id="CHEBI:194145"/>
        <dbReference type="ChEBI" id="CHEBI:228204"/>
    </reaction>
</comment>
<comment type="catalytic activity">
    <reaction evidence="21">
        <text>1,2,3-tri-(9Z,12Z)-octadecadienoylglycerol + 9-hydroxy-octadecanoate = 2,3-di-(9Z,12Z)-octadecadienoyl-sn-glycerol + 9-(9Z,12Z-octadecadienoyloxy)-octadecanoate</text>
        <dbReference type="Rhea" id="RHEA:75023"/>
        <dbReference type="ChEBI" id="CHEBI:75844"/>
        <dbReference type="ChEBI" id="CHEBI:75854"/>
        <dbReference type="ChEBI" id="CHEBI:136286"/>
        <dbReference type="ChEBI" id="CHEBI:194142"/>
    </reaction>
</comment>
<comment type="catalytic activity">
    <reaction evidence="21">
        <text>1,2,3-tri-(9Z)-hexadecenoylglycerol + 9-hydroxy-octadecanoate = 2,3-di-(9Z)-hexadecenoyl-sn-glycerol + 9-(9Z-hexadecenoyloxy)-octadecanoate</text>
        <dbReference type="Rhea" id="RHEA:75027"/>
        <dbReference type="ChEBI" id="CHEBI:75841"/>
        <dbReference type="ChEBI" id="CHEBI:75853"/>
        <dbReference type="ChEBI" id="CHEBI:136286"/>
        <dbReference type="ChEBI" id="CHEBI:136309"/>
    </reaction>
</comment>
<comment type="catalytic activity">
    <reaction evidence="21">
        <text>9-hydroxy-octadecanoate + 1,2-di-(9Z-octadecenoyl)-sn-glycerol = 9-(9Z-octadecenoyloxy)-octadecanoate + 2-(9Z-octadecenoyl)-glycerol</text>
        <dbReference type="Rhea" id="RHEA:75031"/>
        <dbReference type="ChEBI" id="CHEBI:52333"/>
        <dbReference type="ChEBI" id="CHEBI:73990"/>
        <dbReference type="ChEBI" id="CHEBI:136282"/>
        <dbReference type="ChEBI" id="CHEBI:136286"/>
    </reaction>
</comment>
<comment type="catalytic activity">
    <reaction evidence="21">
        <text>1-hexadecanoyl-2,3-di-(9Z)-octadecenoyl-sn-glycerol + 9-hydroxy-octadecanoate = 1-hexadecanoyl-3-(9Z)-octadecenoyl-sn-glycerol + 9-(9Z-octadecenoyloxy)-octadecanoate</text>
        <dbReference type="Rhea" id="RHEA:75035"/>
        <dbReference type="ChEBI" id="CHEBI:75847"/>
        <dbReference type="ChEBI" id="CHEBI:75868"/>
        <dbReference type="ChEBI" id="CHEBI:136282"/>
        <dbReference type="ChEBI" id="CHEBI:136286"/>
    </reaction>
</comment>
<comment type="activity regulation">
    <text evidence="5 13">The triglyceride lipase activity is inhibited by BEL ((E)-6-(bromomethylene)-3-(1-naphthalenyl)-2H-tetrahydropyran-2-one), a suicide substrate inhibitor (PubMed:17032652). No differences in the acylglycerol transacylase was detected in the presence or absence of ATP (PubMed:15364929).</text>
</comment>
<comment type="biophysicochemical properties">
    <phDependence>
        <text evidence="13">Optimum pH is 7.5 with (1,2-dilinoleoyl)-phosphatidylcholine as substrate.</text>
    </phDependence>
</comment>
<comment type="pathway">
    <text>Glycerolipid metabolism; triacylglycerol degradation.</text>
</comment>
<comment type="subunit">
    <text evidence="1 13 17">Interacts with ABHD5; this association stimulates PNPLA2 triglyceride hydrolase activity (By similarity). Interacts with SERPINF1; this interaction stimulates the phospholipase A2 activity of PNPLA2 (PubMed:17032652). Despite a colocalization in lipid droplets, it probably does not interact with PLIN (By similarity). Interacts with PLIN5; prevents interaction with ABHD5 (By similarity). Interacts with FAF2 (PubMed:23297223).</text>
</comment>
<comment type="subcellular location">
    <subcellularLocation>
        <location evidence="9 19 20">Lipid droplet</location>
    </subcellularLocation>
    <subcellularLocation>
        <location evidence="13">Cell membrane</location>
        <topology evidence="2">Multi-pass membrane protein</topology>
    </subcellularLocation>
    <subcellularLocation>
        <location evidence="1">Cytoplasm</location>
    </subcellularLocation>
</comment>
<comment type="alternative products">
    <event type="alternative splicing"/>
    <isoform>
        <id>Q96AD5-1</id>
        <name>1</name>
        <sequence type="displayed"/>
    </isoform>
    <isoform>
        <id>Q96AD5-2</id>
        <name>2</name>
        <sequence type="described" ref="VSP_026421"/>
    </isoform>
</comment>
<comment type="tissue specificity">
    <text evidence="7 8 10 13">Highest expression in adipose tissue. Also detected in heart, skeletal muscle, and portions of the gastrointestinal tract. Detected in normal retina and retinoblastoma cells. Detected in retinal pigment epithelium and, at lower intensity, in the inner segments of photoreceptors and in the ganglion cell layer of the neural retina (at protein level).</text>
</comment>
<comment type="developmental stage">
    <text evidence="10 12 13">Induced during differentiation of primary preadipocytes to adipocytes. Expression increased from fetal to adult in retinal pigment epithelium.</text>
</comment>
<comment type="PTM">
    <text evidence="1 16">Phosphorylation at Ser-404 by PKA is increased during fasting and moderate intensity exercise, and moderately increases lipolytic activity (By similarity). Phosphorylation at Ser-404 is increased upon beta-adrenergic stimulation (PubMed:22733971).</text>
</comment>
<comment type="PTM">
    <text evidence="19 20">Ubiquitinated by PEX2 in response to reactive oxygen species (ROS), leading to its degradation (PubMed:34903883). Ubiquitination is stimulated by LDAH (PubMed:28578400).</text>
</comment>
<comment type="polymorphism">
    <text evidence="11">Genetic variations in PNPLA2 may influence plasma free fatty acids and triglycerides levels, and fasting glucose concentrations.</text>
</comment>
<comment type="disease">
    <text evidence="11">Genetic variations in PNPLA2 may be associated with risk of diabetes mellitus type 2.</text>
</comment>
<comment type="disease" evidence="14">
    <disease id="DI-02050">
        <name>Neutral lipid storage disease with myopathy</name>
        <acronym>NLSDM</acronym>
        <description>Neutral lipid storage disorder (NLSD) with myopathy but without ichthyosis. NLSDs are characterized by the presence of triglyceride-containing cytoplasmic droplets in leukocytes and in other tissues, including bone marrow, skin, and muscle. Individuals with NLSDM did not show obesity, in spite of a defect in triglyceride degradation in fibroblasts and in marked triglyceride storage in liver, muscles, and other visceral cells.</description>
        <dbReference type="MIM" id="610717"/>
    </disease>
    <text>The disease is caused by variants affecting the gene represented in this entry.</text>
</comment>
<comment type="sequence caution" evidence="28">
    <conflict type="frameshift">
        <sequence resource="EMBL-CDS" id="AAP34448"/>
    </conflict>
</comment>
<comment type="sequence caution" evidence="28">
    <conflict type="erroneous initiation">
        <sequence resource="EMBL-CDS" id="CAC01131"/>
    </conflict>
    <text>Extended N-terminus.</text>
</comment>
<comment type="sequence caution" evidence="28">
    <conflict type="erroneous initiation">
        <sequence resource="EMBL-CDS" id="CAC01132"/>
    </conflict>
    <text>Extended N-terminus.</text>
</comment>
<feature type="chain" id="PRO_0000292527" description="Patatin-like phospholipase domain-containing protein 2">
    <location>
        <begin position="1"/>
        <end position="504"/>
    </location>
</feature>
<feature type="topological domain" description="Cytoplasmic" evidence="32">
    <location>
        <begin position="1"/>
        <end position="8"/>
    </location>
</feature>
<feature type="transmembrane region" description="Helical" evidence="2">
    <location>
        <begin position="9"/>
        <end position="29"/>
    </location>
</feature>
<feature type="topological domain" description="Extracellular" evidence="32">
    <location>
        <begin position="30"/>
        <end position="42"/>
    </location>
</feature>
<feature type="transmembrane region" description="Helical" evidence="2">
    <location>
        <begin position="43"/>
        <end position="63"/>
    </location>
</feature>
<feature type="topological domain" description="Cytoplasmic" evidence="32">
    <location>
        <begin position="64"/>
        <end position="137"/>
    </location>
</feature>
<feature type="transmembrane region" description="Helical" evidence="2">
    <location>
        <begin position="138"/>
        <end position="158"/>
    </location>
</feature>
<feature type="topological domain" description="Extracellular" evidence="32">
    <location>
        <begin position="159"/>
        <end position="329"/>
    </location>
</feature>
<feature type="transmembrane region" description="Helical" evidence="2">
    <location>
        <begin position="330"/>
        <end position="350"/>
    </location>
</feature>
<feature type="topological domain" description="Cytoplasmic" evidence="32">
    <location>
        <begin position="351"/>
        <end position="504"/>
    </location>
</feature>
<feature type="domain" description="PNPLA" evidence="3">
    <location>
        <begin position="10"/>
        <end position="179"/>
    </location>
</feature>
<feature type="region of interest" description="Disordered" evidence="4">
    <location>
        <begin position="463"/>
        <end position="492"/>
    </location>
</feature>
<feature type="short sequence motif" description="GXGXXG" evidence="3">
    <location>
        <begin position="14"/>
        <end position="19"/>
    </location>
</feature>
<feature type="short sequence motif" description="GXSXG" evidence="3">
    <location>
        <begin position="45"/>
        <end position="49"/>
    </location>
</feature>
<feature type="short sequence motif" description="DGA/G" evidence="3">
    <location>
        <begin position="166"/>
        <end position="168"/>
    </location>
</feature>
<feature type="active site" description="Nucleophile" evidence="3">
    <location>
        <position position="47"/>
    </location>
</feature>
<feature type="active site" description="Proton acceptor" evidence="3">
    <location>
        <position position="166"/>
    </location>
</feature>
<feature type="modified residue" description="Phosphoserine; in vitro" evidence="1">
    <location>
        <position position="372"/>
    </location>
</feature>
<feature type="modified residue" description="Phosphoserine; by PKA and FAM20C" evidence="16 18 36">
    <location>
        <position position="404"/>
    </location>
</feature>
<feature type="modified residue" description="Phosphoserine" evidence="35 36 37">
    <location>
        <position position="428"/>
    </location>
</feature>
<feature type="glycosylation site" description="N-linked (GlcNAc...) asparagine" evidence="2">
    <location>
        <position position="39"/>
    </location>
</feature>
<feature type="cross-link" description="Glycyl lysine isopeptide (Lys-Gly) (interchain with G-Cter in ubiquitin)" evidence="20">
    <location>
        <position position="92"/>
    </location>
</feature>
<feature type="splice variant" id="VSP_026421" description="In isoform 2." evidence="24">
    <location>
        <begin position="1"/>
        <end position="324"/>
    </location>
</feature>
<feature type="sequence variant" id="VAR_032995" description="In NLSDM; dbSNP:rs121918259." evidence="14">
    <original>P</original>
    <variation>L</variation>
    <location>
        <position position="195"/>
    </location>
</feature>
<feature type="sequence variant" id="VAR_032996" description="In dbSNP:rs140612115." evidence="11">
    <original>L</original>
    <variation>F</variation>
    <location>
        <position position="219"/>
    </location>
</feature>
<feature type="sequence variant" id="VAR_032997" description="In dbSNP:rs140201358." evidence="11">
    <original>N</original>
    <variation>K</variation>
    <location>
        <position position="252"/>
    </location>
</feature>
<feature type="sequence variant" id="VAR_032998" description="In dbSNP:rs1138693." evidence="6 11 22">
    <original>L</original>
    <variation>P</variation>
    <location>
        <position position="481"/>
    </location>
</feature>
<feature type="mutagenesis site" description="Reduces rate of lipid hydrolysis; does not affect the localization around the rim of the adiposomes." evidence="8 9">
    <original>S</original>
    <variation>A</variation>
    <location>
        <position position="47"/>
    </location>
</feature>
<feature type="mutagenesis site" description="Abolished ubiquitination by PEX2." evidence="20">
    <original>K</original>
    <variation>R</variation>
    <location>
        <position position="92"/>
    </location>
</feature>
<feature type="sequence conflict" description="In Ref. 6; AAC09354." evidence="28" ref="6">
    <original>R</original>
    <variation>G</variation>
    <location>
        <position position="163"/>
    </location>
</feature>
<feature type="sequence conflict" description="In Ref. 1; AAW81962." evidence="28" ref="1">
    <original>I</original>
    <variation>V</variation>
    <location>
        <position position="296"/>
    </location>
</feature>
<feature type="sequence conflict" description="In Ref. 3; AAP34448." evidence="28" ref="3">
    <original>A</original>
    <variation>G</variation>
    <location>
        <position position="333"/>
    </location>
</feature>
<feature type="sequence conflict" description="In Ref. 1; AAW81962." evidence="28" ref="1">
    <original>R</original>
    <variation>C</variation>
    <location>
        <position position="351"/>
    </location>
</feature>
<feature type="sequence conflict" description="In Ref. 2; CAC01131/CAC01132." evidence="28" ref="2">
    <original>V</original>
    <variation>L</variation>
    <location>
        <position position="402"/>
    </location>
</feature>
<feature type="sequence conflict" description="In Ref. 1; AAW81962." evidence="28" ref="1">
    <original>L</original>
    <variation>P</variation>
    <location>
        <position position="419"/>
    </location>
</feature>
<keyword id="KW-0025">Alternative splicing</keyword>
<keyword id="KW-1003">Cell membrane</keyword>
<keyword id="KW-0963">Cytoplasm</keyword>
<keyword id="KW-0225">Disease variant</keyword>
<keyword id="KW-0325">Glycoprotein</keyword>
<keyword id="KW-0378">Hydrolase</keyword>
<keyword id="KW-1017">Isopeptide bond</keyword>
<keyword id="KW-0442">Lipid degradation</keyword>
<keyword id="KW-0551">Lipid droplet</keyword>
<keyword id="KW-0443">Lipid metabolism</keyword>
<keyword id="KW-0472">Membrane</keyword>
<keyword id="KW-0597">Phosphoprotein</keyword>
<keyword id="KW-1267">Proteomics identification</keyword>
<keyword id="KW-1185">Reference proteome</keyword>
<keyword id="KW-0735">Signal-anchor</keyword>
<keyword id="KW-0812">Transmembrane</keyword>
<keyword id="KW-1133">Transmembrane helix</keyword>
<keyword id="KW-0832">Ubl conjugation</keyword>